<sequence length="107" mass="10920">MQFSTVISALTLSAVAVFAQETVVSDGVTYVDVTETPEVTVSAVSTELSTSTPYSTTTLAVATLETYAGDNSTSTEHTVEPYSGAALKQEVLGSSLVGVVALVAALL</sequence>
<reference key="1">
    <citation type="journal article" date="2004" name="Nature">
        <title>Genome evolution in yeasts.</title>
        <authorList>
            <person name="Dujon B."/>
            <person name="Sherman D."/>
            <person name="Fischer G."/>
            <person name="Durrens P."/>
            <person name="Casaregola S."/>
            <person name="Lafontaine I."/>
            <person name="de Montigny J."/>
            <person name="Marck C."/>
            <person name="Neuveglise C."/>
            <person name="Talla E."/>
            <person name="Goffard N."/>
            <person name="Frangeul L."/>
            <person name="Aigle M."/>
            <person name="Anthouard V."/>
            <person name="Babour A."/>
            <person name="Barbe V."/>
            <person name="Barnay S."/>
            <person name="Blanchin S."/>
            <person name="Beckerich J.-M."/>
            <person name="Beyne E."/>
            <person name="Bleykasten C."/>
            <person name="Boisrame A."/>
            <person name="Boyer J."/>
            <person name="Cattolico L."/>
            <person name="Confanioleri F."/>
            <person name="de Daruvar A."/>
            <person name="Despons L."/>
            <person name="Fabre E."/>
            <person name="Fairhead C."/>
            <person name="Ferry-Dumazet H."/>
            <person name="Groppi A."/>
            <person name="Hantraye F."/>
            <person name="Hennequin C."/>
            <person name="Jauniaux N."/>
            <person name="Joyet P."/>
            <person name="Kachouri R."/>
            <person name="Kerrest A."/>
            <person name="Koszul R."/>
            <person name="Lemaire M."/>
            <person name="Lesur I."/>
            <person name="Ma L."/>
            <person name="Muller H."/>
            <person name="Nicaud J.-M."/>
            <person name="Nikolski M."/>
            <person name="Oztas S."/>
            <person name="Ozier-Kalogeropoulos O."/>
            <person name="Pellenz S."/>
            <person name="Potier S."/>
            <person name="Richard G.-F."/>
            <person name="Straub M.-L."/>
            <person name="Suleau A."/>
            <person name="Swennen D."/>
            <person name="Tekaia F."/>
            <person name="Wesolowski-Louvel M."/>
            <person name="Westhof E."/>
            <person name="Wirth B."/>
            <person name="Zeniou-Meyer M."/>
            <person name="Zivanovic Y."/>
            <person name="Bolotin-Fukuhara M."/>
            <person name="Thierry A."/>
            <person name="Bouchier C."/>
            <person name="Caudron B."/>
            <person name="Scarpelli C."/>
            <person name="Gaillardin C."/>
            <person name="Weissenbach J."/>
            <person name="Wincker P."/>
            <person name="Souciet J.-L."/>
        </authorList>
    </citation>
    <scope>NUCLEOTIDE SEQUENCE [LARGE SCALE GENOMIC DNA]</scope>
    <source>
        <strain>ATCC 8585 / CBS 2359 / DSM 70799 / NBRC 1267 / NRRL Y-1140 / WM37</strain>
    </source>
</reference>
<accession>Q6CXL4</accession>
<gene>
    <name type="primary">TOS6</name>
    <name type="ordered locus">KLLA0A07315g</name>
</gene>
<comment type="subcellular location">
    <subcellularLocation>
        <location evidence="3">Secreted</location>
        <location evidence="3">Cell wall</location>
    </subcellularLocation>
    <subcellularLocation>
        <location evidence="3">Membrane</location>
        <topology evidence="3">Lipid-anchor</topology>
        <topology evidence="3">GPI-anchor</topology>
    </subcellularLocation>
</comment>
<comment type="PTM">
    <text evidence="1">The GPI-anchor is attached to the protein in the endoplasmic reticulum and serves to target the protein to the cell surface. There, the glucosamine-inositol phospholipid moiety is cleaved off and the GPI-modified mannoprotein is covalently attached via its lipidless GPI glycan remnant to the 1,6-beta-glucan of the outer cell wall layer (By similarity).</text>
</comment>
<comment type="similarity">
    <text evidence="3">Belongs to the TOS6 family.</text>
</comment>
<proteinExistence type="inferred from homology"/>
<name>TOS6_KLULA</name>
<organism>
    <name type="scientific">Kluyveromyces lactis (strain ATCC 8585 / CBS 2359 / DSM 70799 / NBRC 1267 / NRRL Y-1140 / WM37)</name>
    <name type="common">Yeast</name>
    <name type="synonym">Candida sphaerica</name>
    <dbReference type="NCBI Taxonomy" id="284590"/>
    <lineage>
        <taxon>Eukaryota</taxon>
        <taxon>Fungi</taxon>
        <taxon>Dikarya</taxon>
        <taxon>Ascomycota</taxon>
        <taxon>Saccharomycotina</taxon>
        <taxon>Saccharomycetes</taxon>
        <taxon>Saccharomycetales</taxon>
        <taxon>Saccharomycetaceae</taxon>
        <taxon>Kluyveromyces</taxon>
    </lineage>
</organism>
<feature type="signal peptide" evidence="2">
    <location>
        <begin position="1"/>
        <end position="19"/>
    </location>
</feature>
<feature type="chain" id="PRO_0000402232" description="Protein TOS6">
    <location>
        <begin position="20"/>
        <end position="84"/>
    </location>
</feature>
<feature type="propeptide" id="PRO_0000402233" description="Removed in mature form" evidence="2">
    <location>
        <begin position="85"/>
        <end position="107"/>
    </location>
</feature>
<feature type="lipid moiety-binding region" description="GPI-anchor amidated glycine" evidence="2">
    <location>
        <position position="84"/>
    </location>
</feature>
<feature type="glycosylation site" description="N-linked (GlcNAc...) asparagine" evidence="2">
    <location>
        <position position="71"/>
    </location>
</feature>
<protein>
    <recommendedName>
        <fullName>Protein TOS6</fullName>
    </recommendedName>
</protein>
<keyword id="KW-0134">Cell wall</keyword>
<keyword id="KW-0325">Glycoprotein</keyword>
<keyword id="KW-0336">GPI-anchor</keyword>
<keyword id="KW-0449">Lipoprotein</keyword>
<keyword id="KW-0472">Membrane</keyword>
<keyword id="KW-1185">Reference proteome</keyword>
<keyword id="KW-0964">Secreted</keyword>
<keyword id="KW-0732">Signal</keyword>
<dbReference type="EMBL" id="CR382121">
    <property type="protein sequence ID" value="CAH02913.1"/>
    <property type="molecule type" value="Genomic_DNA"/>
</dbReference>
<dbReference type="RefSeq" id="XP_451325.1">
    <property type="nucleotide sequence ID" value="XM_451325.1"/>
</dbReference>
<dbReference type="FunCoup" id="Q6CXL4">
    <property type="interactions" value="61"/>
</dbReference>
<dbReference type="STRING" id="284590.Q6CXL4"/>
<dbReference type="GlyCosmos" id="Q6CXL4">
    <property type="glycosylation" value="1 site, No reported glycans"/>
</dbReference>
<dbReference type="PaxDb" id="284590-Q6CXL4"/>
<dbReference type="KEGG" id="kla:KLLA0_A07315g"/>
<dbReference type="HOGENOM" id="CLU_2210451_0_0_1"/>
<dbReference type="InParanoid" id="Q6CXL4"/>
<dbReference type="OMA" id="CSGGCTP"/>
<dbReference type="Proteomes" id="UP000000598">
    <property type="component" value="Chromosome A"/>
</dbReference>
<dbReference type="GO" id="GO:0005576">
    <property type="term" value="C:extracellular region"/>
    <property type="evidence" value="ECO:0007669"/>
    <property type="project" value="UniProtKB-KW"/>
</dbReference>
<dbReference type="GO" id="GO:0098552">
    <property type="term" value="C:side of membrane"/>
    <property type="evidence" value="ECO:0007669"/>
    <property type="project" value="UniProtKB-KW"/>
</dbReference>
<dbReference type="CDD" id="cd22955">
    <property type="entry name" value="TOS6"/>
    <property type="match status" value="1"/>
</dbReference>
<evidence type="ECO:0000250" key="1"/>
<evidence type="ECO:0000255" key="2"/>
<evidence type="ECO:0000305" key="3"/>